<feature type="chain" id="PRO_0000384297" description="Mitochondrial distribution and morphology protein 12">
    <location>
        <begin position="1"/>
        <end position="441"/>
    </location>
</feature>
<feature type="domain" description="SMP-LTD" evidence="1">
    <location>
        <begin position="1"/>
        <end position="441"/>
    </location>
</feature>
<feature type="region of interest" description="Disordered" evidence="2">
    <location>
        <begin position="68"/>
        <end position="89"/>
    </location>
</feature>
<feature type="region of interest" description="Disordered" evidence="2">
    <location>
        <begin position="183"/>
        <end position="289"/>
    </location>
</feature>
<feature type="compositionally biased region" description="Polar residues" evidence="2">
    <location>
        <begin position="226"/>
        <end position="245"/>
    </location>
</feature>
<feature type="compositionally biased region" description="Polar residues" evidence="2">
    <location>
        <begin position="253"/>
        <end position="263"/>
    </location>
</feature>
<gene>
    <name evidence="1" type="primary">MDM12</name>
    <name type="ORF">PAAG_05444</name>
</gene>
<accession>C1H3V1</accession>
<organism>
    <name type="scientific">Paracoccidioides lutzii (strain ATCC MYA-826 / Pb01)</name>
    <name type="common">Paracoccidioides brasiliensis</name>
    <dbReference type="NCBI Taxonomy" id="502779"/>
    <lineage>
        <taxon>Eukaryota</taxon>
        <taxon>Fungi</taxon>
        <taxon>Dikarya</taxon>
        <taxon>Ascomycota</taxon>
        <taxon>Pezizomycotina</taxon>
        <taxon>Eurotiomycetes</taxon>
        <taxon>Eurotiomycetidae</taxon>
        <taxon>Onygenales</taxon>
        <taxon>Ajellomycetaceae</taxon>
        <taxon>Paracoccidioides</taxon>
    </lineage>
</organism>
<comment type="function">
    <text evidence="1">Component of the ERMES/MDM complex, which serves as a molecular tether to connect the endoplasmic reticulum (ER) and mitochondria. Components of this complex are involved in the control of mitochondrial shape and protein biogenesis, and function in nonvesicular lipid trafficking between the ER and mitochondria. MDM12 is required for the interaction of the ER-resident membrane protein MMM1 and the outer mitochondrial membrane-resident beta-barrel protein MDM10. The MDM12-MMM1 subcomplex functions in the major beta-barrel assembly pathway that is responsible for biogenesis of all mitochondrial outer membrane beta-barrel proteins, and acts in a late step after the SAM complex. The MDM10-MDM12-MMM1 subcomplex further acts in the TOM40-specific pathway after the action of the MDM12-MMM1 complex. Essential for establishing and maintaining the structure of mitochondria and maintenance of mtDNA nucleoids.</text>
</comment>
<comment type="subunit">
    <text evidence="1">Component of the ER-mitochondria encounter structure (ERMES) or MDM complex, composed of MMM1, MDM10, MDM12 and MDM34. A MMM1 homodimer associates with one molecule of MDM12 on each side in a pairwise head-to-tail manner, and the SMP-LTD domains of MMM1 and MDM12 generate a continuous hydrophobic tunnel for phospholipid trafficking.</text>
</comment>
<comment type="subcellular location">
    <subcellularLocation>
        <location evidence="1">Mitochondrion outer membrane</location>
        <topology evidence="1">Peripheral membrane protein</topology>
        <orientation evidence="1">Cytoplasmic side</orientation>
    </subcellularLocation>
    <subcellularLocation>
        <location evidence="1">Endoplasmic reticulum membrane</location>
        <topology evidence="1">Peripheral membrane protein</topology>
        <orientation evidence="1">Cytoplasmic side</orientation>
    </subcellularLocation>
    <text evidence="1">The ERMES/MDM complex localizes to a few discrete foci (around 10 per single cell), that represent mitochondria-endoplasmic reticulum junctions. These foci are often found next to mtDNA nucleoids.</text>
</comment>
<comment type="domain">
    <text evidence="1">The SMP-LTD domain is a barrel-like domain that can bind various types of glycerophospholipids in its interior and mediate their transfer between two adjacent bilayers.</text>
</comment>
<comment type="similarity">
    <text evidence="1">Belongs to the MDM12 family.</text>
</comment>
<proteinExistence type="inferred from homology"/>
<keyword id="KW-0256">Endoplasmic reticulum</keyword>
<keyword id="KW-0445">Lipid transport</keyword>
<keyword id="KW-0446">Lipid-binding</keyword>
<keyword id="KW-0472">Membrane</keyword>
<keyword id="KW-0496">Mitochondrion</keyword>
<keyword id="KW-1000">Mitochondrion outer membrane</keyword>
<keyword id="KW-1185">Reference proteome</keyword>
<keyword id="KW-0813">Transport</keyword>
<name>MDM12_PARBA</name>
<evidence type="ECO:0000255" key="1">
    <source>
        <dbReference type="HAMAP-Rule" id="MF_03104"/>
    </source>
</evidence>
<evidence type="ECO:0000256" key="2">
    <source>
        <dbReference type="SAM" id="MobiDB-lite"/>
    </source>
</evidence>
<reference key="1">
    <citation type="journal article" date="2011" name="PLoS Genet.">
        <title>Comparative genomic analysis of human fungal pathogens causing paracoccidioidomycosis.</title>
        <authorList>
            <person name="Desjardins C.A."/>
            <person name="Champion M.D."/>
            <person name="Holder J.W."/>
            <person name="Muszewska A."/>
            <person name="Goldberg J."/>
            <person name="Bailao A.M."/>
            <person name="Brigido M.M."/>
            <person name="Ferreira M.E."/>
            <person name="Garcia A.M."/>
            <person name="Grynberg M."/>
            <person name="Gujja S."/>
            <person name="Heiman D.I."/>
            <person name="Henn M.R."/>
            <person name="Kodira C.D."/>
            <person name="Leon-Narvaez H."/>
            <person name="Longo L.V.G."/>
            <person name="Ma L.-J."/>
            <person name="Malavazi I."/>
            <person name="Matsuo A.L."/>
            <person name="Morais F.V."/>
            <person name="Pereira M."/>
            <person name="Rodriguez-Brito S."/>
            <person name="Sakthikumar S."/>
            <person name="Salem-Izacc S.M."/>
            <person name="Sykes S.M."/>
            <person name="Teixeira M.M."/>
            <person name="Vallejo M.C."/>
            <person name="Walter M.E."/>
            <person name="Yandava C."/>
            <person name="Young S."/>
            <person name="Zeng Q."/>
            <person name="Zucker J."/>
            <person name="Felipe M.S."/>
            <person name="Goldman G.H."/>
            <person name="Haas B.J."/>
            <person name="McEwen J.G."/>
            <person name="Nino-Vega G."/>
            <person name="Puccia R."/>
            <person name="San-Blas G."/>
            <person name="Soares C.M."/>
            <person name="Birren B.W."/>
            <person name="Cuomo C.A."/>
        </authorList>
    </citation>
    <scope>NUCLEOTIDE SEQUENCE [LARGE SCALE GENOMIC DNA]</scope>
    <source>
        <strain>ATCC MYA-826 / Pb01</strain>
    </source>
</reference>
<protein>
    <recommendedName>
        <fullName evidence="1">Mitochondrial distribution and morphology protein 12</fullName>
    </recommendedName>
    <alternativeName>
        <fullName evidence="1">Mitochondrial inheritance component MDM12</fullName>
    </alternativeName>
</protein>
<sequence>MSIDIDWERATSGPDGELLAERIRSFIHDKFQQMVLPRFIRSVQVTSFNFGTIPPELEIRDLTDPFPDFYEDGDEDLSVSSEEQSPMREQADRYRERIDSWQTNSPGSLEGQMSGRMGFGHPLQLAPDEDGSRLHPLRSPINLGDINPYLFPRSGTPGIPGGTSNLGYFMPLSGLSGSQVPLRAVTRGNPFSGGWPDSPLENEKRIGHGQGPPRRRSEVDVDAIQSRPSTANTGNTLLSRGSVSTGDPRHSHPSQTLLANNPGQVPDANDSPVSAVPPLSGTPPRRMREQKAEDFQVFCRTKYAGNISLSLTAEILLDYPMPSFVGLPLKLNITGLTFDAVAVLAYIRRRIHFCFLSPEDADALIGPETGAGGGDTMEPNSLRRKNLSLLRKIRVESEIGRKENGKQALKNVGKVEKFVLEQVRRIFEEEFVYPSFWTFLV</sequence>
<dbReference type="EMBL" id="KN294005">
    <property type="protein sequence ID" value="EEH34395.2"/>
    <property type="molecule type" value="Genomic_DNA"/>
</dbReference>
<dbReference type="RefSeq" id="XP_002792715.2">
    <property type="nucleotide sequence ID" value="XM_002792669.2"/>
</dbReference>
<dbReference type="STRING" id="502779.C1H3V1"/>
<dbReference type="GeneID" id="9095952"/>
<dbReference type="KEGG" id="pbl:PAAG_05444"/>
<dbReference type="VEuPathDB" id="FungiDB:PAAG_05444"/>
<dbReference type="eggNOG" id="ENOG502S1MJ">
    <property type="taxonomic scope" value="Eukaryota"/>
</dbReference>
<dbReference type="HOGENOM" id="CLU_026794_0_0_1"/>
<dbReference type="OMA" id="KRAHFCF"/>
<dbReference type="OrthoDB" id="3356905at2759"/>
<dbReference type="Proteomes" id="UP000002059">
    <property type="component" value="Partially assembled WGS sequence"/>
</dbReference>
<dbReference type="GO" id="GO:0005789">
    <property type="term" value="C:endoplasmic reticulum membrane"/>
    <property type="evidence" value="ECO:0007669"/>
    <property type="project" value="UniProtKB-SubCell"/>
</dbReference>
<dbReference type="GO" id="GO:0032865">
    <property type="term" value="C:ERMES complex"/>
    <property type="evidence" value="ECO:0007669"/>
    <property type="project" value="UniProtKB-UniRule"/>
</dbReference>
<dbReference type="GO" id="GO:0008289">
    <property type="term" value="F:lipid binding"/>
    <property type="evidence" value="ECO:0007669"/>
    <property type="project" value="UniProtKB-KW"/>
</dbReference>
<dbReference type="GO" id="GO:0000002">
    <property type="term" value="P:mitochondrial genome maintenance"/>
    <property type="evidence" value="ECO:0007669"/>
    <property type="project" value="UniProtKB-UniRule"/>
</dbReference>
<dbReference type="GO" id="GO:1990456">
    <property type="term" value="P:mitochondrion-endoplasmic reticulum membrane tethering"/>
    <property type="evidence" value="ECO:0007669"/>
    <property type="project" value="TreeGrafter"/>
</dbReference>
<dbReference type="GO" id="GO:0015914">
    <property type="term" value="P:phospholipid transport"/>
    <property type="evidence" value="ECO:0007669"/>
    <property type="project" value="TreeGrafter"/>
</dbReference>
<dbReference type="GO" id="GO:0045040">
    <property type="term" value="P:protein insertion into mitochondrial outer membrane"/>
    <property type="evidence" value="ECO:0007669"/>
    <property type="project" value="UniProtKB-UniRule"/>
</dbReference>
<dbReference type="CDD" id="cd21672">
    <property type="entry name" value="SMP_Mdm12"/>
    <property type="match status" value="1"/>
</dbReference>
<dbReference type="HAMAP" id="MF_03104">
    <property type="entry name" value="Mdm12"/>
    <property type="match status" value="1"/>
</dbReference>
<dbReference type="InterPro" id="IPR027532">
    <property type="entry name" value="Mdm12"/>
</dbReference>
<dbReference type="InterPro" id="IPR019411">
    <property type="entry name" value="MMM1_dom"/>
</dbReference>
<dbReference type="InterPro" id="IPR031468">
    <property type="entry name" value="SMP_LBD"/>
</dbReference>
<dbReference type="PANTHER" id="PTHR28204">
    <property type="entry name" value="MITOCHONDRIAL DISTRIBUTION AND MORPHOLOGY PROTEIN 12"/>
    <property type="match status" value="1"/>
</dbReference>
<dbReference type="PANTHER" id="PTHR28204:SF1">
    <property type="entry name" value="MITOCHONDRIAL DISTRIBUTION AND MORPHOLOGY PROTEIN 12"/>
    <property type="match status" value="1"/>
</dbReference>
<dbReference type="Pfam" id="PF10296">
    <property type="entry name" value="MMM1"/>
    <property type="match status" value="1"/>
</dbReference>
<dbReference type="PROSITE" id="PS51847">
    <property type="entry name" value="SMP"/>
    <property type="match status" value="1"/>
</dbReference>